<evidence type="ECO:0000250" key="1">
    <source>
        <dbReference type="UniProtKB" id="B0BNN3"/>
    </source>
</evidence>
<evidence type="ECO:0000250" key="2">
    <source>
        <dbReference type="UniProtKB" id="P00915"/>
    </source>
</evidence>
<evidence type="ECO:0000250" key="3">
    <source>
        <dbReference type="UniProtKB" id="P00918"/>
    </source>
</evidence>
<evidence type="ECO:0000255" key="4">
    <source>
        <dbReference type="PROSITE-ProRule" id="PRU01134"/>
    </source>
</evidence>
<evidence type="ECO:0000256" key="5">
    <source>
        <dbReference type="SAM" id="MobiDB-lite"/>
    </source>
</evidence>
<evidence type="ECO:0000269" key="6">
    <source>
    </source>
</evidence>
<evidence type="ECO:0000305" key="7"/>
<feature type="initiator methionine" description="Removed" evidence="6">
    <location>
        <position position="1"/>
    </location>
</feature>
<feature type="chain" id="PRO_0000077410" description="Carbonic anhydrase 1">
    <location>
        <begin position="2"/>
        <end position="261"/>
    </location>
</feature>
<feature type="domain" description="Alpha-carbonic anhydrase" evidence="4">
    <location>
        <begin position="4"/>
        <end position="261"/>
    </location>
</feature>
<feature type="region of interest" description="Disordered" evidence="5">
    <location>
        <begin position="238"/>
        <end position="261"/>
    </location>
</feature>
<feature type="active site" description="Proton donor/acceptor" evidence="3">
    <location>
        <position position="65"/>
    </location>
</feature>
<feature type="binding site" evidence="2">
    <location>
        <position position="95"/>
    </location>
    <ligand>
        <name>Zn(2+)</name>
        <dbReference type="ChEBI" id="CHEBI:29105"/>
        <note>catalytic</note>
    </ligand>
</feature>
<feature type="binding site" evidence="2">
    <location>
        <position position="97"/>
    </location>
    <ligand>
        <name>Zn(2+)</name>
        <dbReference type="ChEBI" id="CHEBI:29105"/>
        <note>catalytic</note>
    </ligand>
</feature>
<feature type="binding site" evidence="2">
    <location>
        <position position="120"/>
    </location>
    <ligand>
        <name>Zn(2+)</name>
        <dbReference type="ChEBI" id="CHEBI:29105"/>
        <note>catalytic</note>
    </ligand>
</feature>
<feature type="binding site" evidence="3">
    <location>
        <begin position="200"/>
        <end position="201"/>
    </location>
    <ligand>
        <name>substrate</name>
    </ligand>
</feature>
<feature type="binding site" evidence="2">
    <location>
        <position position="200"/>
    </location>
    <ligand>
        <name>substrate</name>
    </ligand>
</feature>
<feature type="modified residue" description="N-acetylalanine" evidence="6">
    <location>
        <position position="2"/>
    </location>
</feature>
<accession>P00916</accession>
<gene>
    <name type="primary">CA1</name>
</gene>
<sequence>MASPDWGYDDKNGPEQWSKLYPIANGNNQSPVDIKTSEAKHDTSLKPISVSYNPATAKEIINVGHSFHVNFEDNDNRSVLKGGPFSDSYRLFQFHFHWGSSNEYGSEHTVDGVKYSSELHIVHWNSAKYSSLAEAVSKADGLAVIGVLMKVGEANPKLQKVLDALHAIKTKGKRAPFTNFDPSTLLPSSLDFWTYSGSLTHPPLYESVTWIICKESISVSSEQLAQFRSLLSNVEGSNPVPIQRNNRPTQPLKGRTVRASF</sequence>
<keyword id="KW-0007">Acetylation</keyword>
<keyword id="KW-0963">Cytoplasm</keyword>
<keyword id="KW-0903">Direct protein sequencing</keyword>
<keyword id="KW-0456">Lyase</keyword>
<keyword id="KW-0479">Metal-binding</keyword>
<keyword id="KW-1185">Reference proteome</keyword>
<keyword id="KW-0862">Zinc</keyword>
<proteinExistence type="evidence at protein level"/>
<protein>
    <recommendedName>
        <fullName>Carbonic anhydrase 1</fullName>
        <ecNumber evidence="2">4.2.1.1</ecNumber>
    </recommendedName>
    <alternativeName>
        <fullName>Carbonate dehydratase I</fullName>
    </alternativeName>
    <alternativeName>
        <fullName>Carbonic anhydrase I</fullName>
        <shortName>CA-I</shortName>
    </alternativeName>
    <alternativeName>
        <fullName>Cyanamide hydratase CA1</fullName>
        <ecNumber evidence="2">4.2.1.69</ecNumber>
    </alternativeName>
</protein>
<dbReference type="EC" id="4.2.1.1" evidence="2"/>
<dbReference type="EC" id="4.2.1.69" evidence="2"/>
<dbReference type="PIR" id="A01139">
    <property type="entry name" value="CRMQ1R"/>
</dbReference>
<dbReference type="SMR" id="P00916"/>
<dbReference type="FunCoup" id="P00916">
    <property type="interactions" value="155"/>
</dbReference>
<dbReference type="STRING" id="9544.ENSMMUP00000079046"/>
<dbReference type="BindingDB" id="P00916"/>
<dbReference type="ChEMBL" id="CHEMBL4105729"/>
<dbReference type="iPTMnet" id="P00916"/>
<dbReference type="PaxDb" id="9544-ENSMMUP00000018892"/>
<dbReference type="eggNOG" id="KOG0382">
    <property type="taxonomic scope" value="Eukaryota"/>
</dbReference>
<dbReference type="InParanoid" id="P00916"/>
<dbReference type="Proteomes" id="UP000006718">
    <property type="component" value="Unassembled WGS sequence"/>
</dbReference>
<dbReference type="GO" id="GO:0005737">
    <property type="term" value="C:cytoplasm"/>
    <property type="evidence" value="ECO:0000318"/>
    <property type="project" value="GO_Central"/>
</dbReference>
<dbReference type="GO" id="GO:0004089">
    <property type="term" value="F:carbonate dehydratase activity"/>
    <property type="evidence" value="ECO:0000250"/>
    <property type="project" value="UniProtKB"/>
</dbReference>
<dbReference type="GO" id="GO:0018820">
    <property type="term" value="F:cyanamide hydratase activity"/>
    <property type="evidence" value="ECO:0000250"/>
    <property type="project" value="UniProtKB"/>
</dbReference>
<dbReference type="GO" id="GO:0008270">
    <property type="term" value="F:zinc ion binding"/>
    <property type="evidence" value="ECO:0007669"/>
    <property type="project" value="InterPro"/>
</dbReference>
<dbReference type="FunFam" id="3.10.200.10:FF:000001">
    <property type="entry name" value="Carbonic anhydrase 2"/>
    <property type="match status" value="1"/>
</dbReference>
<dbReference type="Gene3D" id="3.10.200.10">
    <property type="entry name" value="Alpha carbonic anhydrase"/>
    <property type="match status" value="1"/>
</dbReference>
<dbReference type="InterPro" id="IPR001148">
    <property type="entry name" value="CA_dom"/>
</dbReference>
<dbReference type="InterPro" id="IPR036398">
    <property type="entry name" value="CA_dom_sf"/>
</dbReference>
<dbReference type="InterPro" id="IPR023561">
    <property type="entry name" value="Carbonic_anhydrase_a-class"/>
</dbReference>
<dbReference type="InterPro" id="IPR018338">
    <property type="entry name" value="Carbonic_anhydrase_a-class_CS"/>
</dbReference>
<dbReference type="PANTHER" id="PTHR18952">
    <property type="entry name" value="CARBONIC ANHYDRASE"/>
    <property type="match status" value="1"/>
</dbReference>
<dbReference type="PANTHER" id="PTHR18952:SF282">
    <property type="entry name" value="CARBONIC ANHYDRASE 1"/>
    <property type="match status" value="1"/>
</dbReference>
<dbReference type="Pfam" id="PF00194">
    <property type="entry name" value="Carb_anhydrase"/>
    <property type="match status" value="1"/>
</dbReference>
<dbReference type="SMART" id="SM01057">
    <property type="entry name" value="Carb_anhydrase"/>
    <property type="match status" value="1"/>
</dbReference>
<dbReference type="SUPFAM" id="SSF51069">
    <property type="entry name" value="Carbonic anhydrase"/>
    <property type="match status" value="1"/>
</dbReference>
<dbReference type="PROSITE" id="PS00162">
    <property type="entry name" value="ALPHA_CA_1"/>
    <property type="match status" value="1"/>
</dbReference>
<dbReference type="PROSITE" id="PS51144">
    <property type="entry name" value="ALPHA_CA_2"/>
    <property type="match status" value="1"/>
</dbReference>
<organism>
    <name type="scientific">Macaca mulatta</name>
    <name type="common">Rhesus macaque</name>
    <dbReference type="NCBI Taxonomy" id="9544"/>
    <lineage>
        <taxon>Eukaryota</taxon>
        <taxon>Metazoa</taxon>
        <taxon>Chordata</taxon>
        <taxon>Craniata</taxon>
        <taxon>Vertebrata</taxon>
        <taxon>Euteleostomi</taxon>
        <taxon>Mammalia</taxon>
        <taxon>Eutheria</taxon>
        <taxon>Euarchontoglires</taxon>
        <taxon>Primates</taxon>
        <taxon>Haplorrhini</taxon>
        <taxon>Catarrhini</taxon>
        <taxon>Cercopithecidae</taxon>
        <taxon>Cercopithecinae</taxon>
        <taxon>Macaca</taxon>
    </lineage>
</organism>
<reference key="1">
    <citation type="journal article" date="1980" name="Biochem. Biophys. Res. Commun.">
        <title>The amino acid sequence of carbonic anhydrase I from the rhesus macaque.</title>
        <authorList>
            <person name="Henriksson D."/>
            <person name="Tanis R.J."/>
            <person name="Tashian R.E."/>
        </authorList>
    </citation>
    <scope>PROTEIN SEQUENCE OF 2-261</scope>
    <scope>ACETYLATION AT ALA-2</scope>
</reference>
<name>CAH1_MACMU</name>
<comment type="function">
    <text evidence="2">Catalyzes the reversible hydration of carbon dioxide. Can hydrate cyanamide to urea.</text>
</comment>
<comment type="catalytic activity">
    <reaction evidence="2">
        <text>hydrogencarbonate + H(+) = CO2 + H2O</text>
        <dbReference type="Rhea" id="RHEA:10748"/>
        <dbReference type="ChEBI" id="CHEBI:15377"/>
        <dbReference type="ChEBI" id="CHEBI:15378"/>
        <dbReference type="ChEBI" id="CHEBI:16526"/>
        <dbReference type="ChEBI" id="CHEBI:17544"/>
        <dbReference type="EC" id="4.2.1.1"/>
    </reaction>
</comment>
<comment type="catalytic activity">
    <reaction evidence="2">
        <text>urea = cyanamide + H2O</text>
        <dbReference type="Rhea" id="RHEA:23056"/>
        <dbReference type="ChEBI" id="CHEBI:15377"/>
        <dbReference type="ChEBI" id="CHEBI:16199"/>
        <dbReference type="ChEBI" id="CHEBI:16698"/>
        <dbReference type="EC" id="4.2.1.69"/>
    </reaction>
</comment>
<comment type="cofactor">
    <cofactor evidence="2">
        <name>Zn(2+)</name>
        <dbReference type="ChEBI" id="CHEBI:29105"/>
    </cofactor>
</comment>
<comment type="activity regulation">
    <text evidence="2">Inhibited by acetazolamide.</text>
</comment>
<comment type="subcellular location">
    <subcellularLocation>
        <location evidence="1">Cytoplasm</location>
    </subcellularLocation>
</comment>
<comment type="similarity">
    <text evidence="7">Belongs to the alpha-carbonic anhydrase family.</text>
</comment>